<sequence length="276" mass="29733">MSWWQVIVLAAAQGLTEFLPVSSSGHLAIVSRIFFSGDAGASFTAVSQLGTEAAVVIYFARDIVRILSAWLHGLVVKAHRNTDYRLGWYVIIGTIPICILGLFFKDDIRSGVRNLWVVVTALVVFSGVIALAEYVGRQSRHIERLTWRDAVVVGIAQTLALVPGVSRSGSTISAGLFLGLDRELAARFGFLLAIPAVFASGLFSLPDAFHPVTEGMSATGPQLLVATLIAFVLGLTAVAWLLRFLVRHNMYWFVGYRVLVGTGMLVLLATGTVAAT</sequence>
<dbReference type="EC" id="3.6.1.27" evidence="1"/>
<dbReference type="EMBL" id="CP000611">
    <property type="protein sequence ID" value="ABQ73912.1"/>
    <property type="molecule type" value="Genomic_DNA"/>
</dbReference>
<dbReference type="RefSeq" id="WP_003411105.1">
    <property type="nucleotide sequence ID" value="NZ_CP016972.1"/>
</dbReference>
<dbReference type="SMR" id="A5U4G2"/>
<dbReference type="KEGG" id="mra:MRA_2150"/>
<dbReference type="eggNOG" id="COG1968">
    <property type="taxonomic scope" value="Bacteria"/>
</dbReference>
<dbReference type="HOGENOM" id="CLU_060296_1_0_11"/>
<dbReference type="Proteomes" id="UP000001988">
    <property type="component" value="Chromosome"/>
</dbReference>
<dbReference type="GO" id="GO:0005886">
    <property type="term" value="C:plasma membrane"/>
    <property type="evidence" value="ECO:0007669"/>
    <property type="project" value="UniProtKB-SubCell"/>
</dbReference>
<dbReference type="GO" id="GO:0050380">
    <property type="term" value="F:undecaprenyl-diphosphatase activity"/>
    <property type="evidence" value="ECO:0007669"/>
    <property type="project" value="UniProtKB-UniRule"/>
</dbReference>
<dbReference type="GO" id="GO:0071555">
    <property type="term" value="P:cell wall organization"/>
    <property type="evidence" value="ECO:0007669"/>
    <property type="project" value="UniProtKB-KW"/>
</dbReference>
<dbReference type="GO" id="GO:0009252">
    <property type="term" value="P:peptidoglycan biosynthetic process"/>
    <property type="evidence" value="ECO:0007669"/>
    <property type="project" value="UniProtKB-KW"/>
</dbReference>
<dbReference type="GO" id="GO:0008360">
    <property type="term" value="P:regulation of cell shape"/>
    <property type="evidence" value="ECO:0007669"/>
    <property type="project" value="UniProtKB-KW"/>
</dbReference>
<dbReference type="GO" id="GO:0046677">
    <property type="term" value="P:response to antibiotic"/>
    <property type="evidence" value="ECO:0007669"/>
    <property type="project" value="UniProtKB-UniRule"/>
</dbReference>
<dbReference type="HAMAP" id="MF_01006">
    <property type="entry name" value="Undec_diphosphatase"/>
    <property type="match status" value="1"/>
</dbReference>
<dbReference type="InterPro" id="IPR003824">
    <property type="entry name" value="UppP"/>
</dbReference>
<dbReference type="NCBIfam" id="NF001392">
    <property type="entry name" value="PRK00281.2-1"/>
    <property type="match status" value="1"/>
</dbReference>
<dbReference type="NCBIfam" id="TIGR00753">
    <property type="entry name" value="undec_PP_bacA"/>
    <property type="match status" value="1"/>
</dbReference>
<dbReference type="PANTHER" id="PTHR30622">
    <property type="entry name" value="UNDECAPRENYL-DIPHOSPHATASE"/>
    <property type="match status" value="1"/>
</dbReference>
<dbReference type="PANTHER" id="PTHR30622:SF4">
    <property type="entry name" value="UNDECAPRENYL-DIPHOSPHATASE"/>
    <property type="match status" value="1"/>
</dbReference>
<dbReference type="Pfam" id="PF02673">
    <property type="entry name" value="BacA"/>
    <property type="match status" value="1"/>
</dbReference>
<proteinExistence type="inferred from homology"/>
<comment type="function">
    <text evidence="1">Catalyzes the dephosphorylation of undecaprenyl diphosphate (UPP). Confers resistance to bacitracin.</text>
</comment>
<comment type="catalytic activity">
    <reaction evidence="1">
        <text>di-trans,octa-cis-undecaprenyl diphosphate + H2O = di-trans,octa-cis-undecaprenyl phosphate + phosphate + H(+)</text>
        <dbReference type="Rhea" id="RHEA:28094"/>
        <dbReference type="ChEBI" id="CHEBI:15377"/>
        <dbReference type="ChEBI" id="CHEBI:15378"/>
        <dbReference type="ChEBI" id="CHEBI:43474"/>
        <dbReference type="ChEBI" id="CHEBI:58405"/>
        <dbReference type="ChEBI" id="CHEBI:60392"/>
        <dbReference type="EC" id="3.6.1.27"/>
    </reaction>
</comment>
<comment type="subcellular location">
    <subcellularLocation>
        <location evidence="1">Cell membrane</location>
        <topology evidence="1">Multi-pass membrane protein</topology>
    </subcellularLocation>
</comment>
<comment type="miscellaneous">
    <text>Bacitracin is thought to be involved in the inhibition of peptidoglycan synthesis by sequestering undecaprenyl diphosphate, thereby reducing the pool of lipid carrier available.</text>
</comment>
<comment type="similarity">
    <text evidence="1">Belongs to the UppP family.</text>
</comment>
<evidence type="ECO:0000255" key="1">
    <source>
        <dbReference type="HAMAP-Rule" id="MF_01006"/>
    </source>
</evidence>
<keyword id="KW-0046">Antibiotic resistance</keyword>
<keyword id="KW-1003">Cell membrane</keyword>
<keyword id="KW-0133">Cell shape</keyword>
<keyword id="KW-0961">Cell wall biogenesis/degradation</keyword>
<keyword id="KW-0378">Hydrolase</keyword>
<keyword id="KW-0472">Membrane</keyword>
<keyword id="KW-0573">Peptidoglycan synthesis</keyword>
<keyword id="KW-1185">Reference proteome</keyword>
<keyword id="KW-0812">Transmembrane</keyword>
<keyword id="KW-1133">Transmembrane helix</keyword>
<protein>
    <recommendedName>
        <fullName evidence="1">Undecaprenyl-diphosphatase</fullName>
        <ecNumber evidence="1">3.6.1.27</ecNumber>
    </recommendedName>
    <alternativeName>
        <fullName evidence="1">Bacitracin resistance protein</fullName>
    </alternativeName>
    <alternativeName>
        <fullName evidence="1">Undecaprenyl pyrophosphate phosphatase</fullName>
    </alternativeName>
</protein>
<organism>
    <name type="scientific">Mycobacterium tuberculosis (strain ATCC 25177 / H37Ra)</name>
    <dbReference type="NCBI Taxonomy" id="419947"/>
    <lineage>
        <taxon>Bacteria</taxon>
        <taxon>Bacillati</taxon>
        <taxon>Actinomycetota</taxon>
        <taxon>Actinomycetes</taxon>
        <taxon>Mycobacteriales</taxon>
        <taxon>Mycobacteriaceae</taxon>
        <taxon>Mycobacterium</taxon>
        <taxon>Mycobacterium tuberculosis complex</taxon>
    </lineage>
</organism>
<name>UPPP_MYCTA</name>
<feature type="chain" id="PRO_0000303031" description="Undecaprenyl-diphosphatase">
    <location>
        <begin position="1"/>
        <end position="276"/>
    </location>
</feature>
<feature type="transmembrane region" description="Helical" evidence="1">
    <location>
        <begin position="84"/>
        <end position="104"/>
    </location>
</feature>
<feature type="transmembrane region" description="Helical" evidence="1">
    <location>
        <begin position="115"/>
        <end position="135"/>
    </location>
</feature>
<feature type="transmembrane region" description="Helical" evidence="1">
    <location>
        <begin position="188"/>
        <end position="208"/>
    </location>
</feature>
<feature type="transmembrane region" description="Helical" evidence="1">
    <location>
        <begin position="222"/>
        <end position="242"/>
    </location>
</feature>
<feature type="transmembrane region" description="Helical" evidence="1">
    <location>
        <begin position="250"/>
        <end position="270"/>
    </location>
</feature>
<accession>A5U4G2</accession>
<gene>
    <name evidence="1" type="primary">uppP</name>
    <name type="ordered locus">MRA_2150</name>
</gene>
<reference key="1">
    <citation type="journal article" date="2008" name="PLoS ONE">
        <title>Genetic basis of virulence attenuation revealed by comparative genomic analysis of Mycobacterium tuberculosis strain H37Ra versus H37Rv.</title>
        <authorList>
            <person name="Zheng H."/>
            <person name="Lu L."/>
            <person name="Wang B."/>
            <person name="Pu S."/>
            <person name="Zhang X."/>
            <person name="Zhu G."/>
            <person name="Shi W."/>
            <person name="Zhang L."/>
            <person name="Wang H."/>
            <person name="Wang S."/>
            <person name="Zhao G."/>
            <person name="Zhang Y."/>
        </authorList>
    </citation>
    <scope>NUCLEOTIDE SEQUENCE [LARGE SCALE GENOMIC DNA]</scope>
    <source>
        <strain>ATCC 25177 / H37Ra</strain>
    </source>
</reference>